<dbReference type="EC" id="3.4.24.7"/>
<dbReference type="EMBL" id="AJ278462">
    <property type="protein sequence ID" value="CAC18880.1"/>
    <property type="molecule type" value="mRNA"/>
</dbReference>
<dbReference type="EMBL" id="AK049552">
    <property type="protein sequence ID" value="BAC33807.1"/>
    <property type="molecule type" value="mRNA"/>
</dbReference>
<dbReference type="EMBL" id="AY211543">
    <property type="protein sequence ID" value="AAO37582.1"/>
    <property type="molecule type" value="Genomic_DNA"/>
</dbReference>
<dbReference type="EMBL" id="BC117756">
    <property type="protein sequence ID" value="AAI17757.1"/>
    <property type="molecule type" value="mRNA"/>
</dbReference>
<dbReference type="RefSeq" id="NP_114395.1">
    <property type="nucleotide sequence ID" value="NM_032006.3"/>
</dbReference>
<dbReference type="SMR" id="Q9EPL5"/>
<dbReference type="FunCoup" id="Q9EPL5">
    <property type="interactions" value="118"/>
</dbReference>
<dbReference type="MEROPS" id="M10.033"/>
<dbReference type="GlyCosmos" id="Q9EPL5">
    <property type="glycosylation" value="2 sites, No reported glycans"/>
</dbReference>
<dbReference type="GlyGen" id="Q9EPL5">
    <property type="glycosylation" value="2 sites"/>
</dbReference>
<dbReference type="PhosphoSitePlus" id="Q9EPL5"/>
<dbReference type="PaxDb" id="10090-ENSMUSP00000034492"/>
<dbReference type="DNASU" id="83995"/>
<dbReference type="Ensembl" id="ENSMUST00000217651.3">
    <property type="protein sequence ID" value="ENSMUSP00000151193.3"/>
    <property type="gene ID" value="ENSMUSG00000043089.8"/>
</dbReference>
<dbReference type="GeneID" id="83995"/>
<dbReference type="KEGG" id="mmu:83995"/>
<dbReference type="UCSC" id="uc009ocp.1">
    <property type="organism name" value="mouse"/>
</dbReference>
<dbReference type="AGR" id="MGI:1933846"/>
<dbReference type="CTD" id="83995"/>
<dbReference type="MGI" id="MGI:1933846">
    <property type="gene designation" value="Mmp1a"/>
</dbReference>
<dbReference type="eggNOG" id="KOG1565">
    <property type="taxonomic scope" value="Eukaryota"/>
</dbReference>
<dbReference type="GeneTree" id="ENSGT00940000154907"/>
<dbReference type="InParanoid" id="Q9EPL5"/>
<dbReference type="OMA" id="LHGYPKD"/>
<dbReference type="OrthoDB" id="406838at2759"/>
<dbReference type="PhylomeDB" id="Q9EPL5"/>
<dbReference type="Reactome" id="R-MMU-1442490">
    <property type="pathway name" value="Collagen degradation"/>
</dbReference>
<dbReference type="Reactome" id="R-MMU-1474228">
    <property type="pathway name" value="Degradation of the extracellular matrix"/>
</dbReference>
<dbReference type="Reactome" id="R-MMU-1592389">
    <property type="pathway name" value="Activation of Matrix Metalloproteinases"/>
</dbReference>
<dbReference type="Reactome" id="R-MMU-210991">
    <property type="pathway name" value="Basigin interactions"/>
</dbReference>
<dbReference type="BioGRID-ORCS" id="83995">
    <property type="hits" value="2 hits in 73 CRISPR screens"/>
</dbReference>
<dbReference type="PRO" id="PR:Q9EPL5"/>
<dbReference type="Proteomes" id="UP000000589">
    <property type="component" value="Chromosome 9"/>
</dbReference>
<dbReference type="RNAct" id="Q9EPL5">
    <property type="molecule type" value="protein"/>
</dbReference>
<dbReference type="Bgee" id="ENSMUSG00000043089">
    <property type="expression patterns" value="Expressed in ectoplacental cone and 16 other cell types or tissues"/>
</dbReference>
<dbReference type="GO" id="GO:0031012">
    <property type="term" value="C:extracellular matrix"/>
    <property type="evidence" value="ECO:0007669"/>
    <property type="project" value="InterPro"/>
</dbReference>
<dbReference type="GO" id="GO:0005576">
    <property type="term" value="C:extracellular region"/>
    <property type="evidence" value="ECO:0007669"/>
    <property type="project" value="UniProtKB-KW"/>
</dbReference>
<dbReference type="GO" id="GO:0004222">
    <property type="term" value="F:metalloendopeptidase activity"/>
    <property type="evidence" value="ECO:0007669"/>
    <property type="project" value="UniProtKB-EC"/>
</dbReference>
<dbReference type="GO" id="GO:0008233">
    <property type="term" value="F:peptidase activity"/>
    <property type="evidence" value="ECO:0000314"/>
    <property type="project" value="MGI"/>
</dbReference>
<dbReference type="GO" id="GO:0008270">
    <property type="term" value="F:zinc ion binding"/>
    <property type="evidence" value="ECO:0007669"/>
    <property type="project" value="InterPro"/>
</dbReference>
<dbReference type="GO" id="GO:0071492">
    <property type="term" value="P:cellular response to UV-A"/>
    <property type="evidence" value="ECO:0000250"/>
    <property type="project" value="UniProtKB"/>
</dbReference>
<dbReference type="GO" id="GO:0030574">
    <property type="term" value="P:collagen catabolic process"/>
    <property type="evidence" value="ECO:0007669"/>
    <property type="project" value="UniProtKB-KW"/>
</dbReference>
<dbReference type="GO" id="GO:0006508">
    <property type="term" value="P:proteolysis"/>
    <property type="evidence" value="ECO:0007669"/>
    <property type="project" value="UniProtKB-KW"/>
</dbReference>
<dbReference type="CDD" id="cd00094">
    <property type="entry name" value="HX"/>
    <property type="match status" value="1"/>
</dbReference>
<dbReference type="CDD" id="cd04278">
    <property type="entry name" value="ZnMc_MMP"/>
    <property type="match status" value="1"/>
</dbReference>
<dbReference type="FunFam" id="3.40.390.10:FF:000007">
    <property type="entry name" value="Collagenase 3"/>
    <property type="match status" value="1"/>
</dbReference>
<dbReference type="FunFam" id="2.110.10.10:FF:000002">
    <property type="entry name" value="Matrix metallopeptidase 3"/>
    <property type="match status" value="1"/>
</dbReference>
<dbReference type="Gene3D" id="3.40.390.10">
    <property type="entry name" value="Collagenase (Catalytic Domain)"/>
    <property type="match status" value="1"/>
</dbReference>
<dbReference type="Gene3D" id="2.110.10.10">
    <property type="entry name" value="Hemopexin-like domain"/>
    <property type="match status" value="1"/>
</dbReference>
<dbReference type="InterPro" id="IPR000585">
    <property type="entry name" value="Hemopexin-like_dom"/>
</dbReference>
<dbReference type="InterPro" id="IPR036375">
    <property type="entry name" value="Hemopexin-like_dom_sf"/>
</dbReference>
<dbReference type="InterPro" id="IPR018487">
    <property type="entry name" value="Hemopexin-like_repeat"/>
</dbReference>
<dbReference type="InterPro" id="IPR018486">
    <property type="entry name" value="Hemopexin_CS"/>
</dbReference>
<dbReference type="InterPro" id="IPR033739">
    <property type="entry name" value="M10A_MMP"/>
</dbReference>
<dbReference type="InterPro" id="IPR024079">
    <property type="entry name" value="MetalloPept_cat_dom_sf"/>
</dbReference>
<dbReference type="InterPro" id="IPR001818">
    <property type="entry name" value="Pept_M10_metallopeptidase"/>
</dbReference>
<dbReference type="InterPro" id="IPR021190">
    <property type="entry name" value="Pept_M10A"/>
</dbReference>
<dbReference type="InterPro" id="IPR021158">
    <property type="entry name" value="Pept_M10A_Zn_BS"/>
</dbReference>
<dbReference type="InterPro" id="IPR006026">
    <property type="entry name" value="Peptidase_Metallo"/>
</dbReference>
<dbReference type="InterPro" id="IPR002477">
    <property type="entry name" value="Peptidoglycan-bd-like"/>
</dbReference>
<dbReference type="InterPro" id="IPR036365">
    <property type="entry name" value="PGBD-like_sf"/>
</dbReference>
<dbReference type="PANTHER" id="PTHR10201:SF151">
    <property type="entry name" value="INTERSTITIAL COLLAGENASE"/>
    <property type="match status" value="1"/>
</dbReference>
<dbReference type="PANTHER" id="PTHR10201">
    <property type="entry name" value="MATRIX METALLOPROTEINASE"/>
    <property type="match status" value="1"/>
</dbReference>
<dbReference type="Pfam" id="PF00045">
    <property type="entry name" value="Hemopexin"/>
    <property type="match status" value="3"/>
</dbReference>
<dbReference type="Pfam" id="PF00413">
    <property type="entry name" value="Peptidase_M10"/>
    <property type="match status" value="1"/>
</dbReference>
<dbReference type="Pfam" id="PF01471">
    <property type="entry name" value="PG_binding_1"/>
    <property type="match status" value="1"/>
</dbReference>
<dbReference type="PIRSF" id="PIRSF001191">
    <property type="entry name" value="Peptidase_M10A_matrix"/>
    <property type="match status" value="1"/>
</dbReference>
<dbReference type="PRINTS" id="PR00138">
    <property type="entry name" value="MATRIXIN"/>
</dbReference>
<dbReference type="SMART" id="SM00120">
    <property type="entry name" value="HX"/>
    <property type="match status" value="4"/>
</dbReference>
<dbReference type="SMART" id="SM00235">
    <property type="entry name" value="ZnMc"/>
    <property type="match status" value="1"/>
</dbReference>
<dbReference type="SUPFAM" id="SSF50923">
    <property type="entry name" value="Hemopexin-like domain"/>
    <property type="match status" value="1"/>
</dbReference>
<dbReference type="SUPFAM" id="SSF55486">
    <property type="entry name" value="Metalloproteases ('zincins'), catalytic domain"/>
    <property type="match status" value="1"/>
</dbReference>
<dbReference type="SUPFAM" id="SSF47090">
    <property type="entry name" value="PGBD-like"/>
    <property type="match status" value="1"/>
</dbReference>
<dbReference type="PROSITE" id="PS00546">
    <property type="entry name" value="CYSTEINE_SWITCH"/>
    <property type="match status" value="1"/>
</dbReference>
<dbReference type="PROSITE" id="PS00024">
    <property type="entry name" value="HEMOPEXIN"/>
    <property type="match status" value="1"/>
</dbReference>
<dbReference type="PROSITE" id="PS51642">
    <property type="entry name" value="HEMOPEXIN_2"/>
    <property type="match status" value="4"/>
</dbReference>
<dbReference type="PROSITE" id="PS00142">
    <property type="entry name" value="ZINC_PROTEASE"/>
    <property type="match status" value="1"/>
</dbReference>
<reference key="1">
    <citation type="journal article" date="2001" name="J. Biol. Chem.">
        <title>Identification and enzymatic characterization of two diverging murine counterparts of human interstitial collagenase (MMP-1) expressed at sites of embryo implantation.</title>
        <authorList>
            <person name="Balbin M."/>
            <person name="Fueyo A."/>
            <person name="Knauper V."/>
            <person name="Lopez J.M."/>
            <person name="Alvarez J."/>
            <person name="Sanchez L.M."/>
            <person name="Quesada V."/>
            <person name="Bordallo J."/>
            <person name="Murphy G."/>
            <person name="Lopez-Otin C."/>
        </authorList>
    </citation>
    <scope>NUCLEOTIDE SEQUENCE [MRNA]</scope>
</reference>
<reference key="2">
    <citation type="journal article" date="2005" name="Science">
        <title>The transcriptional landscape of the mammalian genome.</title>
        <authorList>
            <person name="Carninci P."/>
            <person name="Kasukawa T."/>
            <person name="Katayama S."/>
            <person name="Gough J."/>
            <person name="Frith M.C."/>
            <person name="Maeda N."/>
            <person name="Oyama R."/>
            <person name="Ravasi T."/>
            <person name="Lenhard B."/>
            <person name="Wells C."/>
            <person name="Kodzius R."/>
            <person name="Shimokawa K."/>
            <person name="Bajic V.B."/>
            <person name="Brenner S.E."/>
            <person name="Batalov S."/>
            <person name="Forrest A.R."/>
            <person name="Zavolan M."/>
            <person name="Davis M.J."/>
            <person name="Wilming L.G."/>
            <person name="Aidinis V."/>
            <person name="Allen J.E."/>
            <person name="Ambesi-Impiombato A."/>
            <person name="Apweiler R."/>
            <person name="Aturaliya R.N."/>
            <person name="Bailey T.L."/>
            <person name="Bansal M."/>
            <person name="Baxter L."/>
            <person name="Beisel K.W."/>
            <person name="Bersano T."/>
            <person name="Bono H."/>
            <person name="Chalk A.M."/>
            <person name="Chiu K.P."/>
            <person name="Choudhary V."/>
            <person name="Christoffels A."/>
            <person name="Clutterbuck D.R."/>
            <person name="Crowe M.L."/>
            <person name="Dalla E."/>
            <person name="Dalrymple B.P."/>
            <person name="de Bono B."/>
            <person name="Della Gatta G."/>
            <person name="di Bernardo D."/>
            <person name="Down T."/>
            <person name="Engstrom P."/>
            <person name="Fagiolini M."/>
            <person name="Faulkner G."/>
            <person name="Fletcher C.F."/>
            <person name="Fukushima T."/>
            <person name="Furuno M."/>
            <person name="Futaki S."/>
            <person name="Gariboldi M."/>
            <person name="Georgii-Hemming P."/>
            <person name="Gingeras T.R."/>
            <person name="Gojobori T."/>
            <person name="Green R.E."/>
            <person name="Gustincich S."/>
            <person name="Harbers M."/>
            <person name="Hayashi Y."/>
            <person name="Hensch T.K."/>
            <person name="Hirokawa N."/>
            <person name="Hill D."/>
            <person name="Huminiecki L."/>
            <person name="Iacono M."/>
            <person name="Ikeo K."/>
            <person name="Iwama A."/>
            <person name="Ishikawa T."/>
            <person name="Jakt M."/>
            <person name="Kanapin A."/>
            <person name="Katoh M."/>
            <person name="Kawasawa Y."/>
            <person name="Kelso J."/>
            <person name="Kitamura H."/>
            <person name="Kitano H."/>
            <person name="Kollias G."/>
            <person name="Krishnan S.P."/>
            <person name="Kruger A."/>
            <person name="Kummerfeld S.K."/>
            <person name="Kurochkin I.V."/>
            <person name="Lareau L.F."/>
            <person name="Lazarevic D."/>
            <person name="Lipovich L."/>
            <person name="Liu J."/>
            <person name="Liuni S."/>
            <person name="McWilliam S."/>
            <person name="Madan Babu M."/>
            <person name="Madera M."/>
            <person name="Marchionni L."/>
            <person name="Matsuda H."/>
            <person name="Matsuzawa S."/>
            <person name="Miki H."/>
            <person name="Mignone F."/>
            <person name="Miyake S."/>
            <person name="Morris K."/>
            <person name="Mottagui-Tabar S."/>
            <person name="Mulder N."/>
            <person name="Nakano N."/>
            <person name="Nakauchi H."/>
            <person name="Ng P."/>
            <person name="Nilsson R."/>
            <person name="Nishiguchi S."/>
            <person name="Nishikawa S."/>
            <person name="Nori F."/>
            <person name="Ohara O."/>
            <person name="Okazaki Y."/>
            <person name="Orlando V."/>
            <person name="Pang K.C."/>
            <person name="Pavan W.J."/>
            <person name="Pavesi G."/>
            <person name="Pesole G."/>
            <person name="Petrovsky N."/>
            <person name="Piazza S."/>
            <person name="Reed J."/>
            <person name="Reid J.F."/>
            <person name="Ring B.Z."/>
            <person name="Ringwald M."/>
            <person name="Rost B."/>
            <person name="Ruan Y."/>
            <person name="Salzberg S.L."/>
            <person name="Sandelin A."/>
            <person name="Schneider C."/>
            <person name="Schoenbach C."/>
            <person name="Sekiguchi K."/>
            <person name="Semple C.A."/>
            <person name="Seno S."/>
            <person name="Sessa L."/>
            <person name="Sheng Y."/>
            <person name="Shibata Y."/>
            <person name="Shimada H."/>
            <person name="Shimada K."/>
            <person name="Silva D."/>
            <person name="Sinclair B."/>
            <person name="Sperling S."/>
            <person name="Stupka E."/>
            <person name="Sugiura K."/>
            <person name="Sultana R."/>
            <person name="Takenaka Y."/>
            <person name="Taki K."/>
            <person name="Tammoja K."/>
            <person name="Tan S.L."/>
            <person name="Tang S."/>
            <person name="Taylor M.S."/>
            <person name="Tegner J."/>
            <person name="Teichmann S.A."/>
            <person name="Ueda H.R."/>
            <person name="van Nimwegen E."/>
            <person name="Verardo R."/>
            <person name="Wei C.L."/>
            <person name="Yagi K."/>
            <person name="Yamanishi H."/>
            <person name="Zabarovsky E."/>
            <person name="Zhu S."/>
            <person name="Zimmer A."/>
            <person name="Hide W."/>
            <person name="Bult C."/>
            <person name="Grimmond S.M."/>
            <person name="Teasdale R.D."/>
            <person name="Liu E.T."/>
            <person name="Brusic V."/>
            <person name="Quackenbush J."/>
            <person name="Wahlestedt C."/>
            <person name="Mattick J.S."/>
            <person name="Hume D.A."/>
            <person name="Kai C."/>
            <person name="Sasaki D."/>
            <person name="Tomaru Y."/>
            <person name="Fukuda S."/>
            <person name="Kanamori-Katayama M."/>
            <person name="Suzuki M."/>
            <person name="Aoki J."/>
            <person name="Arakawa T."/>
            <person name="Iida J."/>
            <person name="Imamura K."/>
            <person name="Itoh M."/>
            <person name="Kato T."/>
            <person name="Kawaji H."/>
            <person name="Kawagashira N."/>
            <person name="Kawashima T."/>
            <person name="Kojima M."/>
            <person name="Kondo S."/>
            <person name="Konno H."/>
            <person name="Nakano K."/>
            <person name="Ninomiya N."/>
            <person name="Nishio T."/>
            <person name="Okada M."/>
            <person name="Plessy C."/>
            <person name="Shibata K."/>
            <person name="Shiraki T."/>
            <person name="Suzuki S."/>
            <person name="Tagami M."/>
            <person name="Waki K."/>
            <person name="Watahiki A."/>
            <person name="Okamura-Oho Y."/>
            <person name="Suzuki H."/>
            <person name="Kawai J."/>
            <person name="Hayashizaki Y."/>
        </authorList>
    </citation>
    <scope>NUCLEOTIDE SEQUENCE [LARGE SCALE MRNA]</scope>
    <source>
        <strain>C57BL/6J</strain>
    </source>
</reference>
<reference key="3">
    <citation type="submission" date="2003-01" db="EMBL/GenBank/DDBJ databases">
        <title>Genomic sequence analysis in the mouse T-complex region.</title>
        <authorList>
            <person name="Brathwaite M.E."/>
            <person name="Waeltz P."/>
            <person name="Qian Y."/>
            <person name="Dudekula D."/>
            <person name="Schlessinger D."/>
            <person name="Nagaraja R."/>
        </authorList>
    </citation>
    <scope>NUCLEOTIDE SEQUENCE [LARGE SCALE GENOMIC DNA]</scope>
    <source>
        <strain>129/SvJ</strain>
    </source>
</reference>
<reference key="4">
    <citation type="journal article" date="2004" name="Genome Res.">
        <title>The status, quality, and expansion of the NIH full-length cDNA project: the Mammalian Gene Collection (MGC).</title>
        <authorList>
            <consortium name="The MGC Project Team"/>
        </authorList>
    </citation>
    <scope>NUCLEOTIDE SEQUENCE [LARGE SCALE MRNA]</scope>
</reference>
<evidence type="ECO:0000250" key="1"/>
<evidence type="ECO:0000255" key="2"/>
<evidence type="ECO:0000255" key="3">
    <source>
        <dbReference type="PROSITE-ProRule" id="PRU10095"/>
    </source>
</evidence>
<evidence type="ECO:0000305" key="4"/>
<name>MMP1A_MOUSE</name>
<sequence>MPSLPLLLLLWAASSYSFPVFHNGDRQNVETVWKYLENYYNLGKNMQAKNVNGKEMMAEKLRQMQQLFGLKVTGNSDPETLRAMKKPRCGVPDVAPYAITHNNPRWTKTHLTYSILNYTPYLPKAVVEDAIARAFRVWSDVTPLTFQRVFEEEGDIVLSFHRGDHGDNNPFDGPNYKLAHTFQPGPGLGGDVHYDLDETWTNSSENFNLFYVTAHELGHSLGLTHSSDIGALMFPSYTWYTEDFVLNQDDINRIQDLYGPSPNPIQPTGATTPHPCNGDLTFDAITTFRGEVFFFKGRFYIRVNRFMPEPELNLIGILWPNLPVKLDAAYEASMIDQVRYFKGSKVWAVQEQSVLRGFPRDIHSFFGFPSNVTHIDAAVCEEETGKTYFFVDHMYWRYDENTQSMDPGYPRLTAEDFPGIDDKVDDVFQKGENFYFFHQSVQHRFNLQIRRVDDSRDSSTWFNC</sequence>
<organism>
    <name type="scientific">Mus musculus</name>
    <name type="common">Mouse</name>
    <dbReference type="NCBI Taxonomy" id="10090"/>
    <lineage>
        <taxon>Eukaryota</taxon>
        <taxon>Metazoa</taxon>
        <taxon>Chordata</taxon>
        <taxon>Craniata</taxon>
        <taxon>Vertebrata</taxon>
        <taxon>Euteleostomi</taxon>
        <taxon>Mammalia</taxon>
        <taxon>Eutheria</taxon>
        <taxon>Euarchontoglires</taxon>
        <taxon>Glires</taxon>
        <taxon>Rodentia</taxon>
        <taxon>Myomorpha</taxon>
        <taxon>Muroidea</taxon>
        <taxon>Muridae</taxon>
        <taxon>Murinae</taxon>
        <taxon>Mus</taxon>
        <taxon>Mus</taxon>
    </lineage>
</organism>
<comment type="function">
    <text evidence="1">Cleaves collagens of types I, II, and III at one site in the helical domain. Also cleaves collagens of types VII and X (By similarity). Able to degrade synthetic peptides and type I and II fibrillar collagen.</text>
</comment>
<comment type="catalytic activity">
    <reaction>
        <text>Cleavage of the triple helix of collagen at about three-quarters of the length of the molecule from the N-terminus, at 775-Gly-|-Ile-776 in the alpha1(I) chain. Cleaves synthetic substrates and alpha-macroglobulins at bonds where P1' is a hydrophobic residue.</text>
        <dbReference type="EC" id="3.4.24.7"/>
    </reaction>
</comment>
<comment type="cofactor">
    <cofactor evidence="1">
        <name>Ca(2+)</name>
        <dbReference type="ChEBI" id="CHEBI:29108"/>
    </cofactor>
    <text evidence="1">Binds 4 Ca(2+) ions per subunit.</text>
</comment>
<comment type="cofactor">
    <cofactor evidence="1">
        <name>Zn(2+)</name>
        <dbReference type="ChEBI" id="CHEBI:29105"/>
    </cofactor>
    <text evidence="1">Binds 2 Zn(2+) ions per subunit.</text>
</comment>
<comment type="activity regulation">
    <text evidence="1">Can be activated without removal of the activation peptide.</text>
</comment>
<comment type="subcellular location">
    <subcellularLocation>
        <location evidence="4">Secreted</location>
        <location evidence="4">Extracellular space</location>
        <location evidence="4">Extracellular matrix</location>
    </subcellularLocation>
</comment>
<comment type="domain">
    <text>The conserved cysteine present in the cysteine-switch motif binds the catalytic zinc ion, thus inhibiting the enzyme. The dissociation of the cysteine from the zinc ion upon the activation-peptide release activates the enzyme.</text>
</comment>
<comment type="similarity">
    <text evidence="4">Belongs to the peptidase M10A family.</text>
</comment>
<keyword id="KW-0068">Autocatalytic cleavage</keyword>
<keyword id="KW-0106">Calcium</keyword>
<keyword id="KW-0177">Collagen degradation</keyword>
<keyword id="KW-1015">Disulfide bond</keyword>
<keyword id="KW-0272">Extracellular matrix</keyword>
<keyword id="KW-0325">Glycoprotein</keyword>
<keyword id="KW-0378">Hydrolase</keyword>
<keyword id="KW-0479">Metal-binding</keyword>
<keyword id="KW-0482">Metalloprotease</keyword>
<keyword id="KW-0645">Protease</keyword>
<keyword id="KW-1185">Reference proteome</keyword>
<keyword id="KW-0677">Repeat</keyword>
<keyword id="KW-0964">Secreted</keyword>
<keyword id="KW-0732">Signal</keyword>
<keyword id="KW-0862">Zinc</keyword>
<keyword id="KW-0865">Zymogen</keyword>
<proteinExistence type="evidence at transcript level"/>
<accession>Q9EPL5</accession>
<accession>Q149J4</accession>
<gene>
    <name type="primary">Mmp1a</name>
    <name type="synonym">McolA</name>
</gene>
<protein>
    <recommendedName>
        <fullName>Interstitial collagenase A</fullName>
        <ecNumber>3.4.24.7</ecNumber>
    </recommendedName>
    <alternativeName>
        <fullName>Matrix metalloproteinase-1a</fullName>
        <shortName>MMP-1a</shortName>
    </alternativeName>
    <alternativeName>
        <fullName>Mcol-A</fullName>
    </alternativeName>
</protein>
<feature type="signal peptide" evidence="2">
    <location>
        <begin position="1"/>
        <end position="17"/>
    </location>
</feature>
<feature type="propeptide" id="PRO_0000042645" description="Activation peptide" evidence="1">
    <location>
        <begin position="18"/>
        <end position="96"/>
    </location>
</feature>
<feature type="chain" id="PRO_0000042646" description="Interstitial collagenase A">
    <location>
        <begin position="97"/>
        <end position="464"/>
    </location>
</feature>
<feature type="repeat" description="Hemopexin 1">
    <location>
        <begin position="273"/>
        <end position="322"/>
    </location>
</feature>
<feature type="repeat" description="Hemopexin 2">
    <location>
        <begin position="323"/>
        <end position="369"/>
    </location>
</feature>
<feature type="repeat" description="Hemopexin 3">
    <location>
        <begin position="372"/>
        <end position="420"/>
    </location>
</feature>
<feature type="repeat" description="Hemopexin 4">
    <location>
        <begin position="421"/>
        <end position="464"/>
    </location>
</feature>
<feature type="region of interest" description="Metalloprotease">
    <location>
        <begin position="95"/>
        <end position="274"/>
    </location>
</feature>
<feature type="short sequence motif" description="Cysteine switch" evidence="1">
    <location>
        <begin position="87"/>
        <end position="94"/>
    </location>
</feature>
<feature type="active site" evidence="3">
    <location>
        <position position="216"/>
    </location>
</feature>
<feature type="binding site" description="in inhibited form" evidence="1">
    <location>
        <position position="89"/>
    </location>
    <ligand>
        <name>Zn(2+)</name>
        <dbReference type="ChEBI" id="CHEBI:29105"/>
        <label>2</label>
        <note>catalytic</note>
    </ligand>
</feature>
<feature type="binding site" evidence="1">
    <location>
        <position position="155"/>
    </location>
    <ligand>
        <name>Ca(2+)</name>
        <dbReference type="ChEBI" id="CHEBI:29108"/>
        <label>2</label>
    </ligand>
</feature>
<feature type="binding site" evidence="1">
    <location>
        <position position="165"/>
    </location>
    <ligand>
        <name>Zn(2+)</name>
        <dbReference type="ChEBI" id="CHEBI:29105"/>
        <label>1</label>
    </ligand>
</feature>
<feature type="binding site" evidence="1">
    <location>
        <position position="167"/>
    </location>
    <ligand>
        <name>Zn(2+)</name>
        <dbReference type="ChEBI" id="CHEBI:29105"/>
        <label>1</label>
    </ligand>
</feature>
<feature type="binding site" evidence="1">
    <location>
        <position position="172"/>
    </location>
    <ligand>
        <name>Ca(2+)</name>
        <dbReference type="ChEBI" id="CHEBI:29108"/>
        <label>3</label>
    </ligand>
</feature>
<feature type="binding site" evidence="1">
    <location>
        <position position="173"/>
    </location>
    <ligand>
        <name>Ca(2+)</name>
        <dbReference type="ChEBI" id="CHEBI:29108"/>
        <label>3</label>
    </ligand>
</feature>
<feature type="binding site" evidence="1">
    <location>
        <position position="180"/>
    </location>
    <ligand>
        <name>Zn(2+)</name>
        <dbReference type="ChEBI" id="CHEBI:29105"/>
        <label>1</label>
    </ligand>
</feature>
<feature type="binding site" evidence="1">
    <location>
        <position position="187"/>
    </location>
    <ligand>
        <name>Ca(2+)</name>
        <dbReference type="ChEBI" id="CHEBI:29108"/>
        <label>2</label>
    </ligand>
</feature>
<feature type="binding site" evidence="1">
    <location>
        <position position="189"/>
    </location>
    <ligand>
        <name>Ca(2+)</name>
        <dbReference type="ChEBI" id="CHEBI:29108"/>
        <label>2</label>
    </ligand>
</feature>
<feature type="binding site" evidence="1">
    <location>
        <position position="191"/>
    </location>
    <ligand>
        <name>Ca(2+)</name>
        <dbReference type="ChEBI" id="CHEBI:29108"/>
        <label>2</label>
    </ligand>
</feature>
<feature type="binding site" evidence="1">
    <location>
        <position position="193"/>
    </location>
    <ligand>
        <name>Zn(2+)</name>
        <dbReference type="ChEBI" id="CHEBI:29105"/>
        <label>1</label>
    </ligand>
</feature>
<feature type="binding site" evidence="1">
    <location>
        <position position="195"/>
    </location>
    <ligand>
        <name>Ca(2+)</name>
        <dbReference type="ChEBI" id="CHEBI:29108"/>
        <label>3</label>
    </ligand>
</feature>
<feature type="binding site" evidence="1">
    <location>
        <position position="198"/>
    </location>
    <ligand>
        <name>Ca(2+)</name>
        <dbReference type="ChEBI" id="CHEBI:29108"/>
        <label>3</label>
    </ligand>
</feature>
<feature type="binding site" evidence="1">
    <location>
        <position position="215"/>
    </location>
    <ligand>
        <name>Zn(2+)</name>
        <dbReference type="ChEBI" id="CHEBI:29105"/>
        <label>2</label>
        <note>catalytic</note>
    </ligand>
</feature>
<feature type="binding site" evidence="1">
    <location>
        <position position="219"/>
    </location>
    <ligand>
        <name>Zn(2+)</name>
        <dbReference type="ChEBI" id="CHEBI:29105"/>
        <label>2</label>
        <note>catalytic</note>
    </ligand>
</feature>
<feature type="binding site" evidence="1">
    <location>
        <position position="225"/>
    </location>
    <ligand>
        <name>Zn(2+)</name>
        <dbReference type="ChEBI" id="CHEBI:29105"/>
        <label>2</label>
        <note>catalytic</note>
    </ligand>
</feature>
<feature type="binding site" evidence="1">
    <location>
        <position position="283"/>
    </location>
    <ligand>
        <name>Ca(2+)</name>
        <dbReference type="ChEBI" id="CHEBI:29108"/>
        <label>4</label>
    </ligand>
</feature>
<feature type="binding site" evidence="1">
    <location>
        <position position="376"/>
    </location>
    <ligand>
        <name>Ca(2+)</name>
        <dbReference type="ChEBI" id="CHEBI:29108"/>
        <label>4</label>
    </ligand>
</feature>
<feature type="binding site" evidence="1">
    <location>
        <position position="425"/>
    </location>
    <ligand>
        <name>Ca(2+)</name>
        <dbReference type="ChEBI" id="CHEBI:29108"/>
        <label>4</label>
    </ligand>
</feature>
<feature type="glycosylation site" description="N-linked (GlcNAc...) asparagine" evidence="2">
    <location>
        <position position="202"/>
    </location>
</feature>
<feature type="glycosylation site" description="N-linked (GlcNAc...) asparagine" evidence="2">
    <location>
        <position position="371"/>
    </location>
</feature>
<feature type="disulfide bond" evidence="1">
    <location>
        <begin position="276"/>
        <end position="464"/>
    </location>
</feature>